<proteinExistence type="evidence at protein level"/>
<dbReference type="EMBL" id="AY033497">
    <property type="protein sequence ID" value="AAK55110.1"/>
    <property type="molecule type" value="mRNA"/>
</dbReference>
<dbReference type="EMBL" id="AB033744">
    <property type="protein sequence ID" value="BAA85657.1"/>
    <property type="molecule type" value="mRNA"/>
</dbReference>
<dbReference type="EMBL" id="AB100413">
    <property type="protein sequence ID" value="BAC79434.1"/>
    <property type="molecule type" value="mRNA"/>
</dbReference>
<dbReference type="EMBL" id="AB100414">
    <property type="protein sequence ID" value="BAC79435.1"/>
    <property type="molecule type" value="Genomic_DNA"/>
</dbReference>
<dbReference type="EMBL" id="AB100415">
    <property type="protein sequence ID" value="BAC79436.1"/>
    <property type="molecule type" value="Genomic_DNA"/>
</dbReference>
<dbReference type="EMBL" id="AB100416">
    <property type="protein sequence ID" value="BAC79437.1"/>
    <property type="molecule type" value="Genomic_DNA"/>
</dbReference>
<dbReference type="EMBL" id="AB100417">
    <property type="protein sequence ID" value="BAC79438.1"/>
    <property type="molecule type" value="Genomic_DNA"/>
</dbReference>
<dbReference type="EMBL" id="AB100418">
    <property type="protein sequence ID" value="BAC79439.1"/>
    <property type="molecule type" value="Genomic_DNA"/>
</dbReference>
<dbReference type="EMBL" id="AK004268">
    <property type="protein sequence ID" value="BAB23243.2"/>
    <property type="molecule type" value="mRNA"/>
</dbReference>
<dbReference type="EMBL" id="BC125346">
    <property type="protein sequence ID" value="AAI25347.1"/>
    <property type="molecule type" value="mRNA"/>
</dbReference>
<dbReference type="EMBL" id="BC125348">
    <property type="protein sequence ID" value="AAI25349.1"/>
    <property type="molecule type" value="mRNA"/>
</dbReference>
<dbReference type="CCDS" id="CCDS27862.1"/>
<dbReference type="RefSeq" id="NP_064340.1">
    <property type="nucleotide sequence ID" value="NM_019956.1"/>
</dbReference>
<dbReference type="SMR" id="Q9R0H5"/>
<dbReference type="BioGRID" id="208149">
    <property type="interactions" value="4"/>
</dbReference>
<dbReference type="ComplexPortal" id="CPX-5869">
    <property type="entry name" value="Keratin-25 - Keratin-71 dimer complex"/>
</dbReference>
<dbReference type="FunCoup" id="Q9R0H5">
    <property type="interactions" value="25"/>
</dbReference>
<dbReference type="STRING" id="10090.ENSMUSP00000023710"/>
<dbReference type="GlyGen" id="Q9R0H5">
    <property type="glycosylation" value="1 site"/>
</dbReference>
<dbReference type="iPTMnet" id="Q9R0H5"/>
<dbReference type="PhosphoSitePlus" id="Q9R0H5"/>
<dbReference type="jPOST" id="Q9R0H5"/>
<dbReference type="PaxDb" id="10090-ENSMUSP00000023710"/>
<dbReference type="PeptideAtlas" id="Q9R0H5"/>
<dbReference type="ProteomicsDB" id="269169"/>
<dbReference type="Antibodypedia" id="26633">
    <property type="antibodies" value="92 antibodies from 17 providers"/>
</dbReference>
<dbReference type="DNASU" id="56735"/>
<dbReference type="Ensembl" id="ENSMUST00000023710.6">
    <property type="protein sequence ID" value="ENSMUSP00000023710.4"/>
    <property type="gene ID" value="ENSMUSG00000051879.5"/>
</dbReference>
<dbReference type="GeneID" id="56735"/>
<dbReference type="KEGG" id="mmu:56735"/>
<dbReference type="UCSC" id="uc007xtx.1">
    <property type="organism name" value="mouse"/>
</dbReference>
<dbReference type="AGR" id="MGI:1861586"/>
<dbReference type="CTD" id="112802"/>
<dbReference type="MGI" id="MGI:1861586">
    <property type="gene designation" value="Krt71"/>
</dbReference>
<dbReference type="VEuPathDB" id="HostDB:ENSMUSG00000051879"/>
<dbReference type="eggNOG" id="ENOG502SK67">
    <property type="taxonomic scope" value="Eukaryota"/>
</dbReference>
<dbReference type="GeneTree" id="ENSGT00940000162089"/>
<dbReference type="HOGENOM" id="CLU_012560_6_1_1"/>
<dbReference type="InParanoid" id="Q9R0H5"/>
<dbReference type="OMA" id="DIKFFRC"/>
<dbReference type="OrthoDB" id="9623624at2759"/>
<dbReference type="PhylomeDB" id="Q9R0H5"/>
<dbReference type="TreeFam" id="TF317854"/>
<dbReference type="Reactome" id="R-MMU-6805567">
    <property type="pathway name" value="Keratinization"/>
</dbReference>
<dbReference type="Reactome" id="R-MMU-6809371">
    <property type="pathway name" value="Formation of the cornified envelope"/>
</dbReference>
<dbReference type="BioGRID-ORCS" id="56735">
    <property type="hits" value="2 hits in 78 CRISPR screens"/>
</dbReference>
<dbReference type="ChiTaRS" id="Krt71">
    <property type="organism name" value="mouse"/>
</dbReference>
<dbReference type="PRO" id="PR:Q9R0H5"/>
<dbReference type="Proteomes" id="UP000000589">
    <property type="component" value="Chromosome 15"/>
</dbReference>
<dbReference type="RNAct" id="Q9R0H5">
    <property type="molecule type" value="protein"/>
</dbReference>
<dbReference type="Bgee" id="ENSMUSG00000051879">
    <property type="expression patterns" value="Expressed in lip and 20 other cell types or tissues"/>
</dbReference>
<dbReference type="GO" id="GO:0005737">
    <property type="term" value="C:cytoplasm"/>
    <property type="evidence" value="ECO:0007669"/>
    <property type="project" value="UniProtKB-KW"/>
</dbReference>
<dbReference type="GO" id="GO:0045095">
    <property type="term" value="C:keratin filament"/>
    <property type="evidence" value="ECO:0000314"/>
    <property type="project" value="MGI"/>
</dbReference>
<dbReference type="GO" id="GO:0031069">
    <property type="term" value="P:hair follicle morphogenesis"/>
    <property type="evidence" value="ECO:0000315"/>
    <property type="project" value="UniProtKB"/>
</dbReference>
<dbReference type="GO" id="GO:0045109">
    <property type="term" value="P:intermediate filament organization"/>
    <property type="evidence" value="ECO:0000250"/>
    <property type="project" value="UniProtKB"/>
</dbReference>
<dbReference type="FunFam" id="1.20.5.1160:FF:000001">
    <property type="entry name" value="Keratin type II"/>
    <property type="match status" value="1"/>
</dbReference>
<dbReference type="FunFam" id="1.20.5.170:FF:000004">
    <property type="entry name" value="Keratin, type II cytoskeletal 5"/>
    <property type="match status" value="1"/>
</dbReference>
<dbReference type="FunFam" id="1.20.5.500:FF:000001">
    <property type="entry name" value="Type II keratin 23"/>
    <property type="match status" value="1"/>
</dbReference>
<dbReference type="Gene3D" id="1.20.5.170">
    <property type="match status" value="1"/>
</dbReference>
<dbReference type="Gene3D" id="1.20.5.500">
    <property type="entry name" value="Single helix bin"/>
    <property type="match status" value="1"/>
</dbReference>
<dbReference type="Gene3D" id="1.20.5.1160">
    <property type="entry name" value="Vasodilator-stimulated phosphoprotein"/>
    <property type="match status" value="1"/>
</dbReference>
<dbReference type="InterPro" id="IPR018039">
    <property type="entry name" value="IF_conserved"/>
</dbReference>
<dbReference type="InterPro" id="IPR039008">
    <property type="entry name" value="IF_rod_dom"/>
</dbReference>
<dbReference type="InterPro" id="IPR032444">
    <property type="entry name" value="Keratin_2_head"/>
</dbReference>
<dbReference type="InterPro" id="IPR003054">
    <property type="entry name" value="Keratin_II"/>
</dbReference>
<dbReference type="PANTHER" id="PTHR45616">
    <property type="entry name" value="GATA-TYPE DOMAIN-CONTAINING PROTEIN"/>
    <property type="match status" value="1"/>
</dbReference>
<dbReference type="PANTHER" id="PTHR45616:SF16">
    <property type="entry name" value="KERATIN, TYPE II CYTOSKELETAL 71"/>
    <property type="match status" value="1"/>
</dbReference>
<dbReference type="Pfam" id="PF00038">
    <property type="entry name" value="Filament"/>
    <property type="match status" value="1"/>
</dbReference>
<dbReference type="Pfam" id="PF16208">
    <property type="entry name" value="Keratin_2_head"/>
    <property type="match status" value="1"/>
</dbReference>
<dbReference type="PRINTS" id="PR01276">
    <property type="entry name" value="TYPE2KERATIN"/>
</dbReference>
<dbReference type="SMART" id="SM01391">
    <property type="entry name" value="Filament"/>
    <property type="match status" value="1"/>
</dbReference>
<dbReference type="SUPFAM" id="SSF64593">
    <property type="entry name" value="Intermediate filament protein, coiled coil region"/>
    <property type="match status" value="3"/>
</dbReference>
<dbReference type="PROSITE" id="PS00226">
    <property type="entry name" value="IF_ROD_1"/>
    <property type="match status" value="1"/>
</dbReference>
<dbReference type="PROSITE" id="PS51842">
    <property type="entry name" value="IF_ROD_2"/>
    <property type="match status" value="1"/>
</dbReference>
<reference evidence="11 12" key="1">
    <citation type="journal article" date="2001" name="Br. J. Dermatol.">
        <title>Keratin K6irs is specific to the inner root sheath of hair follicles in mice and humans.</title>
        <authorList>
            <person name="Porter R.M."/>
            <person name="Corden L.D."/>
            <person name="Lunny D.P."/>
            <person name="Smith F.J.D."/>
            <person name="Lane E.B."/>
            <person name="McLean W.H.I."/>
        </authorList>
    </citation>
    <scope>NUCLEOTIDE SEQUENCE [MRNA]</scope>
    <scope>TISSUE SPECIFICITY</scope>
    <source>
        <strain evidence="12">C57BL/6J</strain>
        <tissue evidence="6">Skin</tissue>
    </source>
</reference>
<reference evidence="11 13" key="2">
    <citation type="journal article" date="2001" name="J. Invest. Dermatol.">
        <title>A novel type II cytokeratin, mK6irs, is expressed in the Huxley and Henle layers of the mouse inner root sheath.</title>
        <authorList>
            <person name="Aoki N."/>
            <person name="Sawada S."/>
            <person name="Rogers M.A."/>
            <person name="Schweizer J."/>
            <person name="Shimomura Y."/>
            <person name="Tsujimoto T."/>
            <person name="Ito K."/>
            <person name="Ito M."/>
        </authorList>
    </citation>
    <scope>NUCLEOTIDE SEQUENCE [MRNA]</scope>
    <scope>TISSUE SPECIFICITY</scope>
    <scope>DEVELOPMENTAL STAGE</scope>
    <source>
        <strain evidence="5">C57BL/6NCrj</strain>
        <tissue evidence="5">Skin</tissue>
    </source>
</reference>
<reference evidence="11 14" key="3">
    <citation type="journal article" date="2003" name="Genetics">
        <title>A small deletion hotspot in the type II keratin gene mK6irs1/Krt2-6g on mouse chromosome 15, a candidate for causing the wavy hair of the caracul (Ca) mutation.</title>
        <authorList>
            <person name="Kikkawa Y."/>
            <person name="Oyama A.H."/>
            <person name="Ishii R."/>
            <person name="Miura I."/>
            <person name="Amano T."/>
            <person name="Ishii Y."/>
            <person name="Yoshikawa Y."/>
            <person name="Masuya H."/>
            <person name="Wakana S."/>
            <person name="Shiroishi T."/>
            <person name="Taya C."/>
            <person name="Yonekawa H."/>
        </authorList>
    </citation>
    <scope>NUCLEOTIDE SEQUENCE [GENOMIC DNA / MRNA]</scope>
    <scope>FUNCTION</scope>
    <scope>TISSUE SPECIFICITY</scope>
    <scope>MUTAGENESIS OF ASN-140 AND ALA-431</scope>
    <source>
        <strain evidence="17">BALB/cByJ</strain>
        <strain evidence="16">C3H/HeJ</strain>
        <strain>C57BL/6 X C3H</strain>
        <strain evidence="14">C57BL/6J</strain>
        <strain evidence="15">DBA/2J</strain>
        <tissue evidence="7">Skin</tissue>
    </source>
</reference>
<reference key="4">
    <citation type="journal article" date="2005" name="Science">
        <title>The transcriptional landscape of the mammalian genome.</title>
        <authorList>
            <person name="Carninci P."/>
            <person name="Kasukawa T."/>
            <person name="Katayama S."/>
            <person name="Gough J."/>
            <person name="Frith M.C."/>
            <person name="Maeda N."/>
            <person name="Oyama R."/>
            <person name="Ravasi T."/>
            <person name="Lenhard B."/>
            <person name="Wells C."/>
            <person name="Kodzius R."/>
            <person name="Shimokawa K."/>
            <person name="Bajic V.B."/>
            <person name="Brenner S.E."/>
            <person name="Batalov S."/>
            <person name="Forrest A.R."/>
            <person name="Zavolan M."/>
            <person name="Davis M.J."/>
            <person name="Wilming L.G."/>
            <person name="Aidinis V."/>
            <person name="Allen J.E."/>
            <person name="Ambesi-Impiombato A."/>
            <person name="Apweiler R."/>
            <person name="Aturaliya R.N."/>
            <person name="Bailey T.L."/>
            <person name="Bansal M."/>
            <person name="Baxter L."/>
            <person name="Beisel K.W."/>
            <person name="Bersano T."/>
            <person name="Bono H."/>
            <person name="Chalk A.M."/>
            <person name="Chiu K.P."/>
            <person name="Choudhary V."/>
            <person name="Christoffels A."/>
            <person name="Clutterbuck D.R."/>
            <person name="Crowe M.L."/>
            <person name="Dalla E."/>
            <person name="Dalrymple B.P."/>
            <person name="de Bono B."/>
            <person name="Della Gatta G."/>
            <person name="di Bernardo D."/>
            <person name="Down T."/>
            <person name="Engstrom P."/>
            <person name="Fagiolini M."/>
            <person name="Faulkner G."/>
            <person name="Fletcher C.F."/>
            <person name="Fukushima T."/>
            <person name="Furuno M."/>
            <person name="Futaki S."/>
            <person name="Gariboldi M."/>
            <person name="Georgii-Hemming P."/>
            <person name="Gingeras T.R."/>
            <person name="Gojobori T."/>
            <person name="Green R.E."/>
            <person name="Gustincich S."/>
            <person name="Harbers M."/>
            <person name="Hayashi Y."/>
            <person name="Hensch T.K."/>
            <person name="Hirokawa N."/>
            <person name="Hill D."/>
            <person name="Huminiecki L."/>
            <person name="Iacono M."/>
            <person name="Ikeo K."/>
            <person name="Iwama A."/>
            <person name="Ishikawa T."/>
            <person name="Jakt M."/>
            <person name="Kanapin A."/>
            <person name="Katoh M."/>
            <person name="Kawasawa Y."/>
            <person name="Kelso J."/>
            <person name="Kitamura H."/>
            <person name="Kitano H."/>
            <person name="Kollias G."/>
            <person name="Krishnan S.P."/>
            <person name="Kruger A."/>
            <person name="Kummerfeld S.K."/>
            <person name="Kurochkin I.V."/>
            <person name="Lareau L.F."/>
            <person name="Lazarevic D."/>
            <person name="Lipovich L."/>
            <person name="Liu J."/>
            <person name="Liuni S."/>
            <person name="McWilliam S."/>
            <person name="Madan Babu M."/>
            <person name="Madera M."/>
            <person name="Marchionni L."/>
            <person name="Matsuda H."/>
            <person name="Matsuzawa S."/>
            <person name="Miki H."/>
            <person name="Mignone F."/>
            <person name="Miyake S."/>
            <person name="Morris K."/>
            <person name="Mottagui-Tabar S."/>
            <person name="Mulder N."/>
            <person name="Nakano N."/>
            <person name="Nakauchi H."/>
            <person name="Ng P."/>
            <person name="Nilsson R."/>
            <person name="Nishiguchi S."/>
            <person name="Nishikawa S."/>
            <person name="Nori F."/>
            <person name="Ohara O."/>
            <person name="Okazaki Y."/>
            <person name="Orlando V."/>
            <person name="Pang K.C."/>
            <person name="Pavan W.J."/>
            <person name="Pavesi G."/>
            <person name="Pesole G."/>
            <person name="Petrovsky N."/>
            <person name="Piazza S."/>
            <person name="Reed J."/>
            <person name="Reid J.F."/>
            <person name="Ring B.Z."/>
            <person name="Ringwald M."/>
            <person name="Rost B."/>
            <person name="Ruan Y."/>
            <person name="Salzberg S.L."/>
            <person name="Sandelin A."/>
            <person name="Schneider C."/>
            <person name="Schoenbach C."/>
            <person name="Sekiguchi K."/>
            <person name="Semple C.A."/>
            <person name="Seno S."/>
            <person name="Sessa L."/>
            <person name="Sheng Y."/>
            <person name="Shibata Y."/>
            <person name="Shimada H."/>
            <person name="Shimada K."/>
            <person name="Silva D."/>
            <person name="Sinclair B."/>
            <person name="Sperling S."/>
            <person name="Stupka E."/>
            <person name="Sugiura K."/>
            <person name="Sultana R."/>
            <person name="Takenaka Y."/>
            <person name="Taki K."/>
            <person name="Tammoja K."/>
            <person name="Tan S.L."/>
            <person name="Tang S."/>
            <person name="Taylor M.S."/>
            <person name="Tegner J."/>
            <person name="Teichmann S.A."/>
            <person name="Ueda H.R."/>
            <person name="van Nimwegen E."/>
            <person name="Verardo R."/>
            <person name="Wei C.L."/>
            <person name="Yagi K."/>
            <person name="Yamanishi H."/>
            <person name="Zabarovsky E."/>
            <person name="Zhu S."/>
            <person name="Zimmer A."/>
            <person name="Hide W."/>
            <person name="Bult C."/>
            <person name="Grimmond S.M."/>
            <person name="Teasdale R.D."/>
            <person name="Liu E.T."/>
            <person name="Brusic V."/>
            <person name="Quackenbush J."/>
            <person name="Wahlestedt C."/>
            <person name="Mattick J.S."/>
            <person name="Hume D.A."/>
            <person name="Kai C."/>
            <person name="Sasaki D."/>
            <person name="Tomaru Y."/>
            <person name="Fukuda S."/>
            <person name="Kanamori-Katayama M."/>
            <person name="Suzuki M."/>
            <person name="Aoki J."/>
            <person name="Arakawa T."/>
            <person name="Iida J."/>
            <person name="Imamura K."/>
            <person name="Itoh M."/>
            <person name="Kato T."/>
            <person name="Kawaji H."/>
            <person name="Kawagashira N."/>
            <person name="Kawashima T."/>
            <person name="Kojima M."/>
            <person name="Kondo S."/>
            <person name="Konno H."/>
            <person name="Nakano K."/>
            <person name="Ninomiya N."/>
            <person name="Nishio T."/>
            <person name="Okada M."/>
            <person name="Plessy C."/>
            <person name="Shibata K."/>
            <person name="Shiraki T."/>
            <person name="Suzuki S."/>
            <person name="Tagami M."/>
            <person name="Waki K."/>
            <person name="Watahiki A."/>
            <person name="Okamura-Oho Y."/>
            <person name="Suzuki H."/>
            <person name="Kawai J."/>
            <person name="Hayashizaki Y."/>
        </authorList>
    </citation>
    <scope>NUCLEOTIDE SEQUENCE [LARGE SCALE MRNA] OF 381-524</scope>
    <source>
        <strain>C57BL/6J</strain>
        <tissue>Embryo</tissue>
    </source>
</reference>
<reference key="5">
    <citation type="journal article" date="2004" name="Genome Res.">
        <title>The status, quality, and expansion of the NIH full-length cDNA project: the Mammalian Gene Collection (MGC).</title>
        <authorList>
            <consortium name="The MGC Project Team"/>
        </authorList>
    </citation>
    <scope>NUCLEOTIDE SEQUENCE [LARGE SCALE MRNA]</scope>
    <source>
        <tissue>Brain</tissue>
    </source>
</reference>
<reference key="6">
    <citation type="journal article" date="2003" name="J. Invest. Dermatol.">
        <title>Alopecia in a novel mouse model RCO3 is caused by mK6irs1 deficiency.</title>
        <authorList>
            <person name="Peters T."/>
            <person name="Sedlmeier R."/>
            <person name="Buessow H."/>
            <person name="Runkel F."/>
            <person name="Lueers G.H."/>
            <person name="Korthaus D."/>
            <person name="Fuchs H."/>
            <person name="Hrabe de Angelis M."/>
            <person name="Stumm G."/>
            <person name="Russ A.P."/>
            <person name="Porter R.M."/>
            <person name="Augustin M."/>
            <person name="Franz T."/>
        </authorList>
    </citation>
    <scope>DISRUPTION PHENOTYPE</scope>
</reference>
<reference key="7">
    <citation type="journal article" date="2006" name="Mamm. Genome">
        <title>Morphologic and molecular characterization of two novel Krt71 (Krt2-6g) mutations: Krt71rco12 and Krt71rco13.</title>
        <authorList>
            <person name="Runkel F."/>
            <person name="Klaften M."/>
            <person name="Koch K."/>
            <person name="Boehnert V."/>
            <person name="Buessow H."/>
            <person name="Fuchs H."/>
            <person name="Franz T."/>
            <person name="Hrabe de Angelis M."/>
        </authorList>
    </citation>
    <scope>MUTAGENESIS OF ALA-143 AND ILE-146</scope>
</reference>
<sequence>MSRQFTCKSGASNRGFSGCSAVLSGGSSSSYRAGGKGLSGGFGSRSLYSLGGGRSITLNMASGSGKNGGFGFGRNRASGFAGSIFGSVALGPVCPAVCPPGGIHQVTVNESLLAPLNVELDPEIQKVRAQEREQIKALNNKFASFIDKVRFLEQQNQVLQTKWELLQQLDLNNCKNNLEPILEGHISNMRKQLETLSGDRVRLDSELRNVRDVVEDYKKKYEEEINRRTAAENEFVLLKKDVDAAYANKVELQAKVDTMDQDIKFFKCLFEAEMAQIQSHISDMSVILSMDNNRNLDLDSIIDEVRAQYEEIALKSKAEAEALYQTKFQELQLAAGRHGDDLKNTKNEITELTRFIQRLRSEIENAKKQASNLETAIADAEQRGDSALKDARAKLDELEGALHQAKEELARMLREYQELMSLKLALDMEIATYRKLLESEECRMSGEYSSPVSISIISSTSGSGGYGFRPSTVSGGYVANSTSCISGVCSVRGGENRSRGSASDYKDTLTKGSSLSTPSKKGGR</sequence>
<organism>
    <name type="scientific">Mus musculus</name>
    <name type="common">Mouse</name>
    <dbReference type="NCBI Taxonomy" id="10090"/>
    <lineage>
        <taxon>Eukaryota</taxon>
        <taxon>Metazoa</taxon>
        <taxon>Chordata</taxon>
        <taxon>Craniata</taxon>
        <taxon>Vertebrata</taxon>
        <taxon>Euteleostomi</taxon>
        <taxon>Mammalia</taxon>
        <taxon>Eutheria</taxon>
        <taxon>Euarchontoglires</taxon>
        <taxon>Glires</taxon>
        <taxon>Rodentia</taxon>
        <taxon>Myomorpha</taxon>
        <taxon>Muroidea</taxon>
        <taxon>Muridae</taxon>
        <taxon>Murinae</taxon>
        <taxon>Mus</taxon>
        <taxon>Mus</taxon>
    </lineage>
</organism>
<name>K2C71_MOUSE</name>
<protein>
    <recommendedName>
        <fullName>Keratin, type II cytoskeletal 71</fullName>
    </recommendedName>
    <alternativeName>
        <fullName>Cytokeratin-6G</fullName>
        <shortName>CK-6G</shortName>
    </alternativeName>
    <alternativeName>
        <fullName>Cytokeratin-71</fullName>
        <shortName>CK-71</shortName>
    </alternativeName>
    <alternativeName>
        <fullName>Keratin-6G</fullName>
        <shortName>K6G</shortName>
    </alternativeName>
    <alternativeName>
        <fullName>Keratin-71</fullName>
        <shortName>K71</shortName>
    </alternativeName>
    <alternativeName>
        <fullName>Type II inner root sheath-specific keratin-K6irs1</fullName>
        <shortName>mK6irs</shortName>
        <shortName>mK6irs1/Krt2-6g</shortName>
    </alternativeName>
    <alternativeName>
        <fullName>Type-II keratin Kb34</fullName>
    </alternativeName>
</protein>
<accession>Q9R0H5</accession>
<accession>A0JLW9</accession>
<accession>Q7TPF3</accession>
<accession>Q9D0X6</accession>
<feature type="chain" id="PRO_0000063738" description="Keratin, type II cytoskeletal 71">
    <location>
        <begin position="1"/>
        <end position="524"/>
    </location>
</feature>
<feature type="domain" description="IF rod" evidence="3">
    <location>
        <begin position="131"/>
        <end position="444"/>
    </location>
</feature>
<feature type="region of interest" description="Head">
    <location>
        <begin position="1"/>
        <end position="130"/>
    </location>
</feature>
<feature type="region of interest" description="Coil 1A">
    <location>
        <begin position="131"/>
        <end position="166"/>
    </location>
</feature>
<feature type="region of interest" description="Linker 1">
    <location>
        <begin position="167"/>
        <end position="185"/>
    </location>
</feature>
<feature type="region of interest" description="Coil 1B">
    <location>
        <begin position="186"/>
        <end position="277"/>
    </location>
</feature>
<feature type="region of interest" description="Linker 12">
    <location>
        <begin position="278"/>
        <end position="301"/>
    </location>
</feature>
<feature type="region of interest" description="Coil 2">
    <location>
        <begin position="302"/>
        <end position="440"/>
    </location>
</feature>
<feature type="region of interest" description="Tail">
    <location>
        <begin position="441"/>
        <end position="524"/>
    </location>
</feature>
<feature type="region of interest" description="Disordered" evidence="4">
    <location>
        <begin position="493"/>
        <end position="524"/>
    </location>
</feature>
<feature type="compositionally biased region" description="Basic and acidic residues" evidence="4">
    <location>
        <begin position="494"/>
        <end position="509"/>
    </location>
</feature>
<feature type="compositionally biased region" description="Polar residues" evidence="4">
    <location>
        <begin position="510"/>
        <end position="524"/>
    </location>
</feature>
<feature type="site" description="Stutter" evidence="2">
    <location>
        <position position="382"/>
    </location>
</feature>
<feature type="mutagenesis site" description="In caracul Rinshoken; causes a wavy hair phenotype." evidence="7">
    <location>
        <position position="140"/>
    </location>
</feature>
<feature type="mutagenesis site" description="In Rco12; causes a wavy pelage and curly vibrissae." evidence="9">
    <original>A</original>
    <variation>G</variation>
    <location>
        <position position="143"/>
    </location>
</feature>
<feature type="mutagenesis site" description="In Rco13; causes a wavy pelage and curly vibrissae." evidence="9">
    <original>I</original>
    <variation>F</variation>
    <location>
        <position position="146"/>
    </location>
</feature>
<feature type="mutagenesis site" description="In caracul; causes a wavy hair phenotype." evidence="7">
    <original>A</original>
    <variation>D</variation>
    <location>
        <position position="431"/>
    </location>
</feature>
<keyword id="KW-0175">Coiled coil</keyword>
<keyword id="KW-0963">Cytoplasm</keyword>
<keyword id="KW-0206">Cytoskeleton</keyword>
<keyword id="KW-0403">Intermediate filament</keyword>
<keyword id="KW-0416">Keratin</keyword>
<keyword id="KW-1185">Reference proteome</keyword>
<comment type="function">
    <text evidence="7">Plays a central role in hair formation. Essential component of keratin intermediate filaments in the inner root sheath (IRS) of the hair follicle.</text>
</comment>
<comment type="subunit">
    <text>Heterodimer of a type I and a type II keratin. Associates with KRT16 and/or KRT17.</text>
</comment>
<comment type="subcellular location">
    <subcellularLocation>
        <location evidence="1">Cytoplasm</location>
        <location evidence="1">Cytoskeleton</location>
    </subcellularLocation>
</comment>
<comment type="tissue specificity">
    <text evidence="5 6 7">Specifically expressed in the inner root sheath (IRS) of the hair follicle. Present in Henle and the Huxley layers of the IRS, while expression in the cuticle is unsure (at protein level).</text>
</comment>
<comment type="developmental stage">
    <text evidence="5">Expressed exclusively in the inner root sheath (IRS) of anagen hair follicles, where expression is predominantly in the hair cone during anagen III and in the Huxley and Henle layers of the inner root sheath during anagen VI.</text>
</comment>
<comment type="disruption phenotype">
    <text evidence="8">Mice exhibit defects in hair structure and progressive alopecia. Missense mutations cause milder phenotypes such as caracul, characterized by rough and greasy fur, and wavy hair that is pointed in different directions.</text>
</comment>
<comment type="miscellaneous">
    <text>There are two types of cytoskeletal and microfibrillar keratin, I (acidic) and II (neutral to basic) (40-55 and 56-70 kDa, respectively).</text>
</comment>
<comment type="similarity">
    <text evidence="3">Belongs to the intermediate filament family.</text>
</comment>
<gene>
    <name type="primary">Krt71</name>
    <name evidence="10" type="synonym">K6irs1</name>
    <name type="synonym">Kb34</name>
    <name type="synonym">Krt2-6g</name>
    <name type="synonym">Krt6g</name>
</gene>
<evidence type="ECO:0000250" key="1">
    <source>
        <dbReference type="UniProtKB" id="Q3SY84"/>
    </source>
</evidence>
<evidence type="ECO:0000255" key="2"/>
<evidence type="ECO:0000255" key="3">
    <source>
        <dbReference type="PROSITE-ProRule" id="PRU01188"/>
    </source>
</evidence>
<evidence type="ECO:0000256" key="4">
    <source>
        <dbReference type="SAM" id="MobiDB-lite"/>
    </source>
</evidence>
<evidence type="ECO:0000269" key="5">
    <source>
    </source>
</evidence>
<evidence type="ECO:0000269" key="6">
    <source>
    </source>
</evidence>
<evidence type="ECO:0000269" key="7">
    <source>
    </source>
</evidence>
<evidence type="ECO:0000269" key="8">
    <source>
    </source>
</evidence>
<evidence type="ECO:0000269" key="9">
    <source>
    </source>
</evidence>
<evidence type="ECO:0000303" key="10">
    <source>
    </source>
</evidence>
<evidence type="ECO:0000305" key="11"/>
<evidence type="ECO:0000312" key="12">
    <source>
        <dbReference type="EMBL" id="AAK55110.1"/>
    </source>
</evidence>
<evidence type="ECO:0000312" key="13">
    <source>
        <dbReference type="EMBL" id="BAA85657.1"/>
    </source>
</evidence>
<evidence type="ECO:0000312" key="14">
    <source>
        <dbReference type="EMBL" id="BAC79434.1"/>
    </source>
</evidence>
<evidence type="ECO:0000312" key="15">
    <source>
        <dbReference type="EMBL" id="BAC79436.1"/>
    </source>
</evidence>
<evidence type="ECO:0000312" key="16">
    <source>
        <dbReference type="EMBL" id="BAC79437.1"/>
    </source>
</evidence>
<evidence type="ECO:0000312" key="17">
    <source>
        <dbReference type="EMBL" id="BAC79438.1"/>
    </source>
</evidence>